<dbReference type="EMBL" id="CP000241">
    <property type="protein sequence ID" value="ABF84191.1"/>
    <property type="molecule type" value="Genomic_DNA"/>
</dbReference>
<dbReference type="RefSeq" id="WP_001125542.1">
    <property type="nucleotide sequence ID" value="NC_008086.1"/>
</dbReference>
<dbReference type="SMR" id="Q1CV31"/>
<dbReference type="GeneID" id="93236496"/>
<dbReference type="KEGG" id="hpa:HPAG1_0124"/>
<dbReference type="HOGENOM" id="CLU_169643_1_2_7"/>
<dbReference type="GO" id="GO:0022625">
    <property type="term" value="C:cytosolic large ribosomal subunit"/>
    <property type="evidence" value="ECO:0007669"/>
    <property type="project" value="TreeGrafter"/>
</dbReference>
<dbReference type="GO" id="GO:0003735">
    <property type="term" value="F:structural constituent of ribosome"/>
    <property type="evidence" value="ECO:0007669"/>
    <property type="project" value="InterPro"/>
</dbReference>
<dbReference type="GO" id="GO:0006412">
    <property type="term" value="P:translation"/>
    <property type="evidence" value="ECO:0007669"/>
    <property type="project" value="UniProtKB-UniRule"/>
</dbReference>
<dbReference type="FunFam" id="4.10.410.60:FF:000001">
    <property type="entry name" value="50S ribosomal protein L35"/>
    <property type="match status" value="1"/>
</dbReference>
<dbReference type="Gene3D" id="4.10.410.60">
    <property type="match status" value="1"/>
</dbReference>
<dbReference type="HAMAP" id="MF_00514">
    <property type="entry name" value="Ribosomal_bL35"/>
    <property type="match status" value="1"/>
</dbReference>
<dbReference type="InterPro" id="IPR001706">
    <property type="entry name" value="Ribosomal_bL35"/>
</dbReference>
<dbReference type="InterPro" id="IPR021137">
    <property type="entry name" value="Ribosomal_bL35-like"/>
</dbReference>
<dbReference type="InterPro" id="IPR018265">
    <property type="entry name" value="Ribosomal_bL35_CS"/>
</dbReference>
<dbReference type="InterPro" id="IPR037229">
    <property type="entry name" value="Ribosomal_bL35_sf"/>
</dbReference>
<dbReference type="NCBIfam" id="TIGR00001">
    <property type="entry name" value="rpmI_bact"/>
    <property type="match status" value="1"/>
</dbReference>
<dbReference type="PANTHER" id="PTHR33343">
    <property type="entry name" value="54S RIBOSOMAL PROTEIN BL35M"/>
    <property type="match status" value="1"/>
</dbReference>
<dbReference type="PANTHER" id="PTHR33343:SF1">
    <property type="entry name" value="LARGE RIBOSOMAL SUBUNIT PROTEIN BL35M"/>
    <property type="match status" value="1"/>
</dbReference>
<dbReference type="Pfam" id="PF01632">
    <property type="entry name" value="Ribosomal_L35p"/>
    <property type="match status" value="1"/>
</dbReference>
<dbReference type="PRINTS" id="PR00064">
    <property type="entry name" value="RIBOSOMALL35"/>
</dbReference>
<dbReference type="SUPFAM" id="SSF143034">
    <property type="entry name" value="L35p-like"/>
    <property type="match status" value="1"/>
</dbReference>
<dbReference type="PROSITE" id="PS00936">
    <property type="entry name" value="RIBOSOMAL_L35"/>
    <property type="match status" value="1"/>
</dbReference>
<organism>
    <name type="scientific">Helicobacter pylori (strain HPAG1)</name>
    <dbReference type="NCBI Taxonomy" id="357544"/>
    <lineage>
        <taxon>Bacteria</taxon>
        <taxon>Pseudomonadati</taxon>
        <taxon>Campylobacterota</taxon>
        <taxon>Epsilonproteobacteria</taxon>
        <taxon>Campylobacterales</taxon>
        <taxon>Helicobacteraceae</taxon>
        <taxon>Helicobacter</taxon>
    </lineage>
</organism>
<protein>
    <recommendedName>
        <fullName evidence="1">Large ribosomal subunit protein bL35</fullName>
    </recommendedName>
    <alternativeName>
        <fullName evidence="3">50S ribosomal protein L35</fullName>
    </alternativeName>
</protein>
<sequence length="64" mass="7260">MPKMKTNRGASKRFKVKKNLIKRGSAFKSHILTKKSPKRKANLNAPKHVHHTNAHSVMSLLCRA</sequence>
<reference key="1">
    <citation type="journal article" date="2006" name="Proc. Natl. Acad. Sci. U.S.A.">
        <title>The complete genome sequence of a chronic atrophic gastritis Helicobacter pylori strain: evolution during disease progression.</title>
        <authorList>
            <person name="Oh J.D."/>
            <person name="Kling-Baeckhed H."/>
            <person name="Giannakis M."/>
            <person name="Xu J."/>
            <person name="Fulton R.S."/>
            <person name="Fulton L.A."/>
            <person name="Cordum H.S."/>
            <person name="Wang C."/>
            <person name="Elliott G."/>
            <person name="Edwards J."/>
            <person name="Mardis E.R."/>
            <person name="Engstrand L.G."/>
            <person name="Gordon J.I."/>
        </authorList>
    </citation>
    <scope>NUCLEOTIDE SEQUENCE [LARGE SCALE GENOMIC DNA]</scope>
    <source>
        <strain>HPAG1</strain>
    </source>
</reference>
<comment type="similarity">
    <text evidence="1">Belongs to the bacterial ribosomal protein bL35 family.</text>
</comment>
<accession>Q1CV31</accession>
<keyword id="KW-0687">Ribonucleoprotein</keyword>
<keyword id="KW-0689">Ribosomal protein</keyword>
<feature type="chain" id="PRO_0000258688" description="Large ribosomal subunit protein bL35">
    <location>
        <begin position="1"/>
        <end position="64"/>
    </location>
</feature>
<feature type="region of interest" description="Disordered" evidence="2">
    <location>
        <begin position="38"/>
        <end position="64"/>
    </location>
</feature>
<feature type="compositionally biased region" description="Basic residues" evidence="2">
    <location>
        <begin position="38"/>
        <end position="53"/>
    </location>
</feature>
<proteinExistence type="inferred from homology"/>
<gene>
    <name evidence="1" type="primary">rpmI</name>
    <name type="ordered locus">HPAG1_0124</name>
</gene>
<name>RL35_HELPH</name>
<evidence type="ECO:0000255" key="1">
    <source>
        <dbReference type="HAMAP-Rule" id="MF_00514"/>
    </source>
</evidence>
<evidence type="ECO:0000256" key="2">
    <source>
        <dbReference type="SAM" id="MobiDB-lite"/>
    </source>
</evidence>
<evidence type="ECO:0000305" key="3"/>